<sequence length="234" mass="26102">MTQQLNVDPAEIKKFEDMASRWWDLEGEFKPLHQINPLRLNYVLENANGLFGKKVLDVGCGGGILAESMAKQGADVVGLDMGKEPLTVARLHALETGTKLEYVQSTAEQHAEENPETYDVVTCMEMLEHVPDPLSVIRSCAKMVKPGGHVFFSTLNRNIKSYLFAIVGAEQLLKLVPKGTHDHNKFIRPSELLKMLDQTALQERGITGLHYNPLTDTYSLGKNVDVNYIVHTTL</sequence>
<comment type="function">
    <text evidence="1">O-methyltransferase that catalyzes the 2 O-methylation steps in the ubiquinone biosynthetic pathway.</text>
</comment>
<comment type="catalytic activity">
    <reaction evidence="1">
        <text>a 3-demethylubiquinol + S-adenosyl-L-methionine = a ubiquinol + S-adenosyl-L-homocysteine + H(+)</text>
        <dbReference type="Rhea" id="RHEA:44380"/>
        <dbReference type="Rhea" id="RHEA-COMP:9566"/>
        <dbReference type="Rhea" id="RHEA-COMP:10914"/>
        <dbReference type="ChEBI" id="CHEBI:15378"/>
        <dbReference type="ChEBI" id="CHEBI:17976"/>
        <dbReference type="ChEBI" id="CHEBI:57856"/>
        <dbReference type="ChEBI" id="CHEBI:59789"/>
        <dbReference type="ChEBI" id="CHEBI:84422"/>
        <dbReference type="EC" id="2.1.1.64"/>
    </reaction>
</comment>
<comment type="catalytic activity">
    <reaction evidence="1">
        <text>a 3-(all-trans-polyprenyl)benzene-1,2-diol + S-adenosyl-L-methionine = a 2-methoxy-6-(all-trans-polyprenyl)phenol + S-adenosyl-L-homocysteine + H(+)</text>
        <dbReference type="Rhea" id="RHEA:31411"/>
        <dbReference type="Rhea" id="RHEA-COMP:9550"/>
        <dbReference type="Rhea" id="RHEA-COMP:9551"/>
        <dbReference type="ChEBI" id="CHEBI:15378"/>
        <dbReference type="ChEBI" id="CHEBI:57856"/>
        <dbReference type="ChEBI" id="CHEBI:59789"/>
        <dbReference type="ChEBI" id="CHEBI:62729"/>
        <dbReference type="ChEBI" id="CHEBI:62731"/>
        <dbReference type="EC" id="2.1.1.222"/>
    </reaction>
</comment>
<comment type="pathway">
    <text evidence="1">Cofactor biosynthesis; ubiquinone biosynthesis.</text>
</comment>
<comment type="similarity">
    <text evidence="1">Belongs to the methyltransferase superfamily. UbiG/COQ3 family.</text>
</comment>
<dbReference type="EC" id="2.1.1.222" evidence="1"/>
<dbReference type="EC" id="2.1.1.64" evidence="1"/>
<dbReference type="EMBL" id="CP001139">
    <property type="protein sequence ID" value="ACH66255.1"/>
    <property type="molecule type" value="Genomic_DNA"/>
</dbReference>
<dbReference type="RefSeq" id="WP_012533605.1">
    <property type="nucleotide sequence ID" value="NC_011184.1"/>
</dbReference>
<dbReference type="SMR" id="B5FDT8"/>
<dbReference type="KEGG" id="vfm:VFMJ11_1282"/>
<dbReference type="HOGENOM" id="CLU_042432_5_0_6"/>
<dbReference type="UniPathway" id="UPA00232"/>
<dbReference type="Proteomes" id="UP000001857">
    <property type="component" value="Chromosome I"/>
</dbReference>
<dbReference type="GO" id="GO:0102208">
    <property type="term" value="F:2-polyprenyl-6-hydroxyphenol methylase activity"/>
    <property type="evidence" value="ECO:0007669"/>
    <property type="project" value="UniProtKB-EC"/>
</dbReference>
<dbReference type="GO" id="GO:0061542">
    <property type="term" value="F:3-demethylubiquinol 3-O-methyltransferase activity"/>
    <property type="evidence" value="ECO:0007669"/>
    <property type="project" value="UniProtKB-UniRule"/>
</dbReference>
<dbReference type="GO" id="GO:0010420">
    <property type="term" value="F:polyprenyldihydroxybenzoate methyltransferase activity"/>
    <property type="evidence" value="ECO:0007669"/>
    <property type="project" value="InterPro"/>
</dbReference>
<dbReference type="GO" id="GO:0032259">
    <property type="term" value="P:methylation"/>
    <property type="evidence" value="ECO:0007669"/>
    <property type="project" value="UniProtKB-KW"/>
</dbReference>
<dbReference type="CDD" id="cd02440">
    <property type="entry name" value="AdoMet_MTases"/>
    <property type="match status" value="1"/>
</dbReference>
<dbReference type="FunFam" id="3.40.50.150:FF:000028">
    <property type="entry name" value="Ubiquinone biosynthesis O-methyltransferase"/>
    <property type="match status" value="1"/>
</dbReference>
<dbReference type="Gene3D" id="3.40.50.150">
    <property type="entry name" value="Vaccinia Virus protein VP39"/>
    <property type="match status" value="1"/>
</dbReference>
<dbReference type="HAMAP" id="MF_00472">
    <property type="entry name" value="UbiG"/>
    <property type="match status" value="1"/>
</dbReference>
<dbReference type="InterPro" id="IPR029063">
    <property type="entry name" value="SAM-dependent_MTases_sf"/>
</dbReference>
<dbReference type="InterPro" id="IPR010233">
    <property type="entry name" value="UbiG_MeTrfase"/>
</dbReference>
<dbReference type="NCBIfam" id="TIGR01983">
    <property type="entry name" value="UbiG"/>
    <property type="match status" value="1"/>
</dbReference>
<dbReference type="PANTHER" id="PTHR43464">
    <property type="entry name" value="METHYLTRANSFERASE"/>
    <property type="match status" value="1"/>
</dbReference>
<dbReference type="PANTHER" id="PTHR43464:SF19">
    <property type="entry name" value="UBIQUINONE BIOSYNTHESIS O-METHYLTRANSFERASE, MITOCHONDRIAL"/>
    <property type="match status" value="1"/>
</dbReference>
<dbReference type="Pfam" id="PF13489">
    <property type="entry name" value="Methyltransf_23"/>
    <property type="match status" value="1"/>
</dbReference>
<dbReference type="SUPFAM" id="SSF53335">
    <property type="entry name" value="S-adenosyl-L-methionine-dependent methyltransferases"/>
    <property type="match status" value="1"/>
</dbReference>
<name>UBIG_ALIFM</name>
<keyword id="KW-0489">Methyltransferase</keyword>
<keyword id="KW-0949">S-adenosyl-L-methionine</keyword>
<keyword id="KW-0808">Transferase</keyword>
<keyword id="KW-0831">Ubiquinone biosynthesis</keyword>
<organism>
    <name type="scientific">Aliivibrio fischeri (strain MJ11)</name>
    <name type="common">Vibrio fischeri</name>
    <dbReference type="NCBI Taxonomy" id="388396"/>
    <lineage>
        <taxon>Bacteria</taxon>
        <taxon>Pseudomonadati</taxon>
        <taxon>Pseudomonadota</taxon>
        <taxon>Gammaproteobacteria</taxon>
        <taxon>Vibrionales</taxon>
        <taxon>Vibrionaceae</taxon>
        <taxon>Aliivibrio</taxon>
    </lineage>
</organism>
<gene>
    <name evidence="1" type="primary">ubiG</name>
    <name type="ordered locus">VFMJ11_1282</name>
</gene>
<reference key="1">
    <citation type="submission" date="2008-08" db="EMBL/GenBank/DDBJ databases">
        <title>Complete sequence of Vibrio fischeri strain MJ11.</title>
        <authorList>
            <person name="Mandel M.J."/>
            <person name="Stabb E.V."/>
            <person name="Ruby E.G."/>
            <person name="Ferriera S."/>
            <person name="Johnson J."/>
            <person name="Kravitz S."/>
            <person name="Beeson K."/>
            <person name="Sutton G."/>
            <person name="Rogers Y.-H."/>
            <person name="Friedman R."/>
            <person name="Frazier M."/>
            <person name="Venter J.C."/>
        </authorList>
    </citation>
    <scope>NUCLEOTIDE SEQUENCE [LARGE SCALE GENOMIC DNA]</scope>
    <source>
        <strain>MJ11</strain>
    </source>
</reference>
<evidence type="ECO:0000255" key="1">
    <source>
        <dbReference type="HAMAP-Rule" id="MF_00472"/>
    </source>
</evidence>
<protein>
    <recommendedName>
        <fullName evidence="1">Ubiquinone biosynthesis O-methyltransferase</fullName>
    </recommendedName>
    <alternativeName>
        <fullName evidence="1">2-polyprenyl-6-hydroxyphenol methylase</fullName>
        <ecNumber evidence="1">2.1.1.222</ecNumber>
    </alternativeName>
    <alternativeName>
        <fullName evidence="1">3-demethylubiquinone 3-O-methyltransferase</fullName>
        <ecNumber evidence="1">2.1.1.64</ecNumber>
    </alternativeName>
</protein>
<feature type="chain" id="PRO_1000199704" description="Ubiquinone biosynthesis O-methyltransferase">
    <location>
        <begin position="1"/>
        <end position="234"/>
    </location>
</feature>
<feature type="binding site" evidence="1">
    <location>
        <position position="39"/>
    </location>
    <ligand>
        <name>S-adenosyl-L-methionine</name>
        <dbReference type="ChEBI" id="CHEBI:59789"/>
    </ligand>
</feature>
<feature type="binding site" evidence="1">
    <location>
        <position position="59"/>
    </location>
    <ligand>
        <name>S-adenosyl-L-methionine</name>
        <dbReference type="ChEBI" id="CHEBI:59789"/>
    </ligand>
</feature>
<feature type="binding site" evidence="1">
    <location>
        <position position="80"/>
    </location>
    <ligand>
        <name>S-adenosyl-L-methionine</name>
        <dbReference type="ChEBI" id="CHEBI:59789"/>
    </ligand>
</feature>
<feature type="binding site" evidence="1">
    <location>
        <position position="124"/>
    </location>
    <ligand>
        <name>S-adenosyl-L-methionine</name>
        <dbReference type="ChEBI" id="CHEBI:59789"/>
    </ligand>
</feature>
<accession>B5FDT8</accession>
<proteinExistence type="inferred from homology"/>